<gene>
    <name evidence="1" type="primary">rpsM</name>
    <name type="ordered locus">Cbei_0177</name>
</gene>
<keyword id="KW-0687">Ribonucleoprotein</keyword>
<keyword id="KW-0689">Ribosomal protein</keyword>
<keyword id="KW-0694">RNA-binding</keyword>
<keyword id="KW-0699">rRNA-binding</keyword>
<keyword id="KW-0820">tRNA-binding</keyword>
<proteinExistence type="inferred from homology"/>
<protein>
    <recommendedName>
        <fullName evidence="1">Small ribosomal subunit protein uS13</fullName>
    </recommendedName>
    <alternativeName>
        <fullName evidence="3">30S ribosomal protein S13</fullName>
    </alternativeName>
</protein>
<dbReference type="EMBL" id="CP000721">
    <property type="protein sequence ID" value="ABR32367.1"/>
    <property type="molecule type" value="Genomic_DNA"/>
</dbReference>
<dbReference type="RefSeq" id="WP_011967530.1">
    <property type="nucleotide sequence ID" value="NC_009617.1"/>
</dbReference>
<dbReference type="SMR" id="A6LPT7"/>
<dbReference type="GeneID" id="66343067"/>
<dbReference type="KEGG" id="cbe:Cbei_0177"/>
<dbReference type="eggNOG" id="COG0099">
    <property type="taxonomic scope" value="Bacteria"/>
</dbReference>
<dbReference type="HOGENOM" id="CLU_103849_1_2_9"/>
<dbReference type="Proteomes" id="UP000000565">
    <property type="component" value="Chromosome"/>
</dbReference>
<dbReference type="GO" id="GO:0005829">
    <property type="term" value="C:cytosol"/>
    <property type="evidence" value="ECO:0007669"/>
    <property type="project" value="TreeGrafter"/>
</dbReference>
<dbReference type="GO" id="GO:0015935">
    <property type="term" value="C:small ribosomal subunit"/>
    <property type="evidence" value="ECO:0007669"/>
    <property type="project" value="TreeGrafter"/>
</dbReference>
<dbReference type="GO" id="GO:0019843">
    <property type="term" value="F:rRNA binding"/>
    <property type="evidence" value="ECO:0007669"/>
    <property type="project" value="UniProtKB-UniRule"/>
</dbReference>
<dbReference type="GO" id="GO:0003735">
    <property type="term" value="F:structural constituent of ribosome"/>
    <property type="evidence" value="ECO:0007669"/>
    <property type="project" value="InterPro"/>
</dbReference>
<dbReference type="GO" id="GO:0000049">
    <property type="term" value="F:tRNA binding"/>
    <property type="evidence" value="ECO:0007669"/>
    <property type="project" value="UniProtKB-UniRule"/>
</dbReference>
<dbReference type="GO" id="GO:0006412">
    <property type="term" value="P:translation"/>
    <property type="evidence" value="ECO:0007669"/>
    <property type="project" value="UniProtKB-UniRule"/>
</dbReference>
<dbReference type="FunFam" id="1.10.8.50:FF:000001">
    <property type="entry name" value="30S ribosomal protein S13"/>
    <property type="match status" value="1"/>
</dbReference>
<dbReference type="FunFam" id="4.10.910.10:FF:000001">
    <property type="entry name" value="30S ribosomal protein S13"/>
    <property type="match status" value="1"/>
</dbReference>
<dbReference type="Gene3D" id="1.10.8.50">
    <property type="match status" value="1"/>
</dbReference>
<dbReference type="Gene3D" id="4.10.910.10">
    <property type="entry name" value="30s ribosomal protein s13, domain 2"/>
    <property type="match status" value="1"/>
</dbReference>
<dbReference type="HAMAP" id="MF_01315">
    <property type="entry name" value="Ribosomal_uS13"/>
    <property type="match status" value="1"/>
</dbReference>
<dbReference type="InterPro" id="IPR027437">
    <property type="entry name" value="Rbsml_uS13_C"/>
</dbReference>
<dbReference type="InterPro" id="IPR001892">
    <property type="entry name" value="Ribosomal_uS13"/>
</dbReference>
<dbReference type="InterPro" id="IPR010979">
    <property type="entry name" value="Ribosomal_uS13-like_H2TH"/>
</dbReference>
<dbReference type="InterPro" id="IPR019980">
    <property type="entry name" value="Ribosomal_uS13_bac-type"/>
</dbReference>
<dbReference type="InterPro" id="IPR018269">
    <property type="entry name" value="Ribosomal_uS13_CS"/>
</dbReference>
<dbReference type="NCBIfam" id="TIGR03631">
    <property type="entry name" value="uS13_bact"/>
    <property type="match status" value="1"/>
</dbReference>
<dbReference type="PANTHER" id="PTHR10871">
    <property type="entry name" value="30S RIBOSOMAL PROTEIN S13/40S RIBOSOMAL PROTEIN S18"/>
    <property type="match status" value="1"/>
</dbReference>
<dbReference type="PANTHER" id="PTHR10871:SF1">
    <property type="entry name" value="SMALL RIBOSOMAL SUBUNIT PROTEIN US13M"/>
    <property type="match status" value="1"/>
</dbReference>
<dbReference type="Pfam" id="PF00416">
    <property type="entry name" value="Ribosomal_S13"/>
    <property type="match status" value="1"/>
</dbReference>
<dbReference type="PIRSF" id="PIRSF002134">
    <property type="entry name" value="Ribosomal_S13"/>
    <property type="match status" value="1"/>
</dbReference>
<dbReference type="SUPFAM" id="SSF46946">
    <property type="entry name" value="S13-like H2TH domain"/>
    <property type="match status" value="1"/>
</dbReference>
<dbReference type="PROSITE" id="PS00646">
    <property type="entry name" value="RIBOSOMAL_S13_1"/>
    <property type="match status" value="1"/>
</dbReference>
<dbReference type="PROSITE" id="PS50159">
    <property type="entry name" value="RIBOSOMAL_S13_2"/>
    <property type="match status" value="1"/>
</dbReference>
<comment type="function">
    <text evidence="1">Located at the top of the head of the 30S subunit, it contacts several helices of the 16S rRNA. In the 70S ribosome it contacts the 23S rRNA (bridge B1a) and protein L5 of the 50S subunit (bridge B1b), connecting the 2 subunits; these bridges are implicated in subunit movement. Contacts the tRNAs in the A and P-sites.</text>
</comment>
<comment type="subunit">
    <text evidence="1">Part of the 30S ribosomal subunit. Forms a loose heterodimer with protein S19. Forms two bridges to the 50S subunit in the 70S ribosome.</text>
</comment>
<comment type="similarity">
    <text evidence="1">Belongs to the universal ribosomal protein uS13 family.</text>
</comment>
<feature type="chain" id="PRO_1000086233" description="Small ribosomal subunit protein uS13">
    <location>
        <begin position="1"/>
        <end position="122"/>
    </location>
</feature>
<feature type="region of interest" description="Disordered" evidence="2">
    <location>
        <begin position="93"/>
        <end position="122"/>
    </location>
</feature>
<organism>
    <name type="scientific">Clostridium beijerinckii (strain ATCC 51743 / NCIMB 8052)</name>
    <name type="common">Clostridium acetobutylicum</name>
    <dbReference type="NCBI Taxonomy" id="290402"/>
    <lineage>
        <taxon>Bacteria</taxon>
        <taxon>Bacillati</taxon>
        <taxon>Bacillota</taxon>
        <taxon>Clostridia</taxon>
        <taxon>Eubacteriales</taxon>
        <taxon>Clostridiaceae</taxon>
        <taxon>Clostridium</taxon>
    </lineage>
</organism>
<name>RS13_CLOB8</name>
<reference key="1">
    <citation type="submission" date="2007-06" db="EMBL/GenBank/DDBJ databases">
        <title>Complete sequence of Clostridium beijerinckii NCIMB 8052.</title>
        <authorList>
            <consortium name="US DOE Joint Genome Institute"/>
            <person name="Copeland A."/>
            <person name="Lucas S."/>
            <person name="Lapidus A."/>
            <person name="Barry K."/>
            <person name="Detter J.C."/>
            <person name="Glavina del Rio T."/>
            <person name="Hammon N."/>
            <person name="Israni S."/>
            <person name="Dalin E."/>
            <person name="Tice H."/>
            <person name="Pitluck S."/>
            <person name="Sims D."/>
            <person name="Brettin T."/>
            <person name="Bruce D."/>
            <person name="Tapia R."/>
            <person name="Brainard J."/>
            <person name="Schmutz J."/>
            <person name="Larimer F."/>
            <person name="Land M."/>
            <person name="Hauser L."/>
            <person name="Kyrpides N."/>
            <person name="Mikhailova N."/>
            <person name="Bennet G."/>
            <person name="Cann I."/>
            <person name="Chen J.-S."/>
            <person name="Contreras A.L."/>
            <person name="Jones D."/>
            <person name="Kashket E."/>
            <person name="Mitchell W."/>
            <person name="Stoddard S."/>
            <person name="Schwarz W."/>
            <person name="Qureshi N."/>
            <person name="Young M."/>
            <person name="Shi Z."/>
            <person name="Ezeji T."/>
            <person name="White B."/>
            <person name="Blaschek H."/>
            <person name="Richardson P."/>
        </authorList>
    </citation>
    <scope>NUCLEOTIDE SEQUENCE [LARGE SCALE GENOMIC DNA]</scope>
    <source>
        <strain>ATCC 51743 / NCIMB 8052</strain>
    </source>
</reference>
<sequence>MARISGIDLPREKRVEIGLTYIYGIGLSTSQKILAVTGINPDTRVKDLSEEEVNEIRTYINKNLMVEGDLRRDVALNIKRLVEIGSYRGIRHRRGLPVRGQKTKTNARTRKGPKKTIANKKK</sequence>
<accession>A6LPT7</accession>
<evidence type="ECO:0000255" key="1">
    <source>
        <dbReference type="HAMAP-Rule" id="MF_01315"/>
    </source>
</evidence>
<evidence type="ECO:0000256" key="2">
    <source>
        <dbReference type="SAM" id="MobiDB-lite"/>
    </source>
</evidence>
<evidence type="ECO:0000305" key="3"/>